<proteinExistence type="inferred from homology"/>
<dbReference type="EC" id="5.4.2.12" evidence="1"/>
<dbReference type="EMBL" id="CP000743">
    <property type="protein sequence ID" value="ABR55774.1"/>
    <property type="molecule type" value="Genomic_DNA"/>
</dbReference>
<dbReference type="RefSeq" id="WP_011972906.1">
    <property type="nucleotide sequence ID" value="NC_009635.1"/>
</dbReference>
<dbReference type="SMR" id="A6UTF2"/>
<dbReference type="STRING" id="419665.Maeo_0182"/>
<dbReference type="GeneID" id="5327502"/>
<dbReference type="KEGG" id="mae:Maeo_0182"/>
<dbReference type="eggNOG" id="arCOG01696">
    <property type="taxonomic scope" value="Archaea"/>
</dbReference>
<dbReference type="HOGENOM" id="CLU_034906_2_0_2"/>
<dbReference type="OrthoDB" id="52918at2157"/>
<dbReference type="UniPathway" id="UPA00109">
    <property type="reaction ID" value="UER00186"/>
</dbReference>
<dbReference type="Proteomes" id="UP000001106">
    <property type="component" value="Chromosome"/>
</dbReference>
<dbReference type="GO" id="GO:0046872">
    <property type="term" value="F:metal ion binding"/>
    <property type="evidence" value="ECO:0007669"/>
    <property type="project" value="InterPro"/>
</dbReference>
<dbReference type="GO" id="GO:0004619">
    <property type="term" value="F:phosphoglycerate mutase activity"/>
    <property type="evidence" value="ECO:0007669"/>
    <property type="project" value="UniProtKB-EC"/>
</dbReference>
<dbReference type="GO" id="GO:0006096">
    <property type="term" value="P:glycolytic process"/>
    <property type="evidence" value="ECO:0007669"/>
    <property type="project" value="UniProtKB-UniRule"/>
</dbReference>
<dbReference type="CDD" id="cd16011">
    <property type="entry name" value="iPGM_like"/>
    <property type="match status" value="1"/>
</dbReference>
<dbReference type="Gene3D" id="3.40.720.10">
    <property type="entry name" value="Alkaline Phosphatase, subunit A"/>
    <property type="match status" value="1"/>
</dbReference>
<dbReference type="Gene3D" id="3.30.70.2130">
    <property type="entry name" value="Metalloenzyme domain"/>
    <property type="match status" value="1"/>
</dbReference>
<dbReference type="HAMAP" id="MF_01402_A">
    <property type="entry name" value="ApgM_A"/>
    <property type="match status" value="1"/>
</dbReference>
<dbReference type="InterPro" id="IPR017850">
    <property type="entry name" value="Alkaline_phosphatase_core_sf"/>
</dbReference>
<dbReference type="InterPro" id="IPR023665">
    <property type="entry name" value="ApgAM_prokaryotes"/>
</dbReference>
<dbReference type="InterPro" id="IPR006124">
    <property type="entry name" value="Metalloenzyme"/>
</dbReference>
<dbReference type="InterPro" id="IPR004456">
    <property type="entry name" value="Pglycerate_mutase_ApgM"/>
</dbReference>
<dbReference type="InterPro" id="IPR042253">
    <property type="entry name" value="Pglycerate_mutase_ApgM_sf"/>
</dbReference>
<dbReference type="NCBIfam" id="TIGR00306">
    <property type="entry name" value="apgM"/>
    <property type="match status" value="1"/>
</dbReference>
<dbReference type="NCBIfam" id="NF003104">
    <property type="entry name" value="PRK04024.1"/>
    <property type="match status" value="1"/>
</dbReference>
<dbReference type="PANTHER" id="PTHR31209">
    <property type="entry name" value="COFACTOR-INDEPENDENT PHOSPHOGLYCERATE MUTASE"/>
    <property type="match status" value="1"/>
</dbReference>
<dbReference type="PANTHER" id="PTHR31209:SF0">
    <property type="entry name" value="METALLOENZYME DOMAIN-CONTAINING PROTEIN"/>
    <property type="match status" value="1"/>
</dbReference>
<dbReference type="Pfam" id="PF01676">
    <property type="entry name" value="Metalloenzyme"/>
    <property type="match status" value="1"/>
</dbReference>
<dbReference type="Pfam" id="PF10143">
    <property type="entry name" value="PhosphMutase"/>
    <property type="match status" value="1"/>
</dbReference>
<dbReference type="PIRSF" id="PIRSF006392">
    <property type="entry name" value="IPGAM_arch"/>
    <property type="match status" value="1"/>
</dbReference>
<dbReference type="SUPFAM" id="SSF53649">
    <property type="entry name" value="Alkaline phosphatase-like"/>
    <property type="match status" value="1"/>
</dbReference>
<reference key="1">
    <citation type="submission" date="2007-06" db="EMBL/GenBank/DDBJ databases">
        <title>Complete sequence of Methanococcus aeolicus Nankai-3.</title>
        <authorList>
            <consortium name="US DOE Joint Genome Institute"/>
            <person name="Copeland A."/>
            <person name="Lucas S."/>
            <person name="Lapidus A."/>
            <person name="Barry K."/>
            <person name="Glavina del Rio T."/>
            <person name="Dalin E."/>
            <person name="Tice H."/>
            <person name="Pitluck S."/>
            <person name="Chain P."/>
            <person name="Malfatti S."/>
            <person name="Shin M."/>
            <person name="Vergez L."/>
            <person name="Schmutz J."/>
            <person name="Larimer F."/>
            <person name="Land M."/>
            <person name="Hauser L."/>
            <person name="Kyrpides N."/>
            <person name="Lykidis A."/>
            <person name="Sieprawska-Lupa M."/>
            <person name="Whitman W.B."/>
            <person name="Richardson P."/>
        </authorList>
    </citation>
    <scope>NUCLEOTIDE SEQUENCE [LARGE SCALE GENOMIC DNA]</scope>
    <source>
        <strain>ATCC BAA-1280 / DSM 17508 / OCM 812 / Nankai-3</strain>
    </source>
</reference>
<gene>
    <name evidence="1" type="primary">apgM</name>
    <name type="ordered locus">Maeo_0182</name>
</gene>
<evidence type="ECO:0000255" key="1">
    <source>
        <dbReference type="HAMAP-Rule" id="MF_01402"/>
    </source>
</evidence>
<evidence type="ECO:0000256" key="2">
    <source>
        <dbReference type="SAM" id="MobiDB-lite"/>
    </source>
</evidence>
<sequence>MKAVVFIIDGLGDRPNKQGNTPLKEAHTPTMDKMAKEGICGIMNAVDIGVGPGSDTAHLALLGYNPYTTYTGRGPFEACGVGIDVKAGDIAFRCNFATVDDNLTIIDRRAGRIKNTEELEKAIDGLKVDGVEVIFKQSGGYRAALVLRGPNLSDKITEGDPHKEGVPIPEVKPLDNSEDAKRTATILNKVIKIAHDKLNSHPVNEERRKNGELPANAILPRGVGMVPNIQPFNEKNDIKGACIAGTGLIKGIAKMVQLDYIDVEGATGTPTTNLKNKADALLNAIKTYDFVLINVKGADEASHDGNYELKKEFIEKIDKMLKYILENIDKNEVYITLTGDHSTPIEKKDHSADPIPIVIWGKSVRVDAVETFDEFSTYKGGLCWIKGENIVPILLDLTGKAHKYGA</sequence>
<protein>
    <recommendedName>
        <fullName evidence="1">2,3-bisphosphoglycerate-independent phosphoglycerate mutase</fullName>
        <shortName evidence="1">BPG-independent PGAM</shortName>
        <shortName evidence="1">Phosphoglyceromutase</shortName>
        <shortName evidence="1">aPGAM</shortName>
        <ecNumber evidence="1">5.4.2.12</ecNumber>
    </recommendedName>
</protein>
<organism>
    <name type="scientific">Methanococcus aeolicus (strain ATCC BAA-1280 / DSM 17508 / OCM 812 / Nankai-3)</name>
    <dbReference type="NCBI Taxonomy" id="419665"/>
    <lineage>
        <taxon>Archaea</taxon>
        <taxon>Methanobacteriati</taxon>
        <taxon>Methanobacteriota</taxon>
        <taxon>Methanomada group</taxon>
        <taxon>Methanococci</taxon>
        <taxon>Methanococcales</taxon>
        <taxon>Methanococcaceae</taxon>
        <taxon>Methanococcus</taxon>
    </lineage>
</organism>
<feature type="chain" id="PRO_1000087362" description="2,3-bisphosphoglycerate-independent phosphoglycerate mutase">
    <location>
        <begin position="1"/>
        <end position="406"/>
    </location>
</feature>
<feature type="region of interest" description="Disordered" evidence="2">
    <location>
        <begin position="156"/>
        <end position="177"/>
    </location>
</feature>
<feature type="compositionally biased region" description="Basic and acidic residues" evidence="2">
    <location>
        <begin position="156"/>
        <end position="165"/>
    </location>
</feature>
<name>APGM_META3</name>
<keyword id="KW-0324">Glycolysis</keyword>
<keyword id="KW-0413">Isomerase</keyword>
<accession>A6UTF2</accession>
<comment type="function">
    <text evidence="1">Catalyzes the interconversion of 2-phosphoglycerate and 3-phosphoglycerate.</text>
</comment>
<comment type="catalytic activity">
    <reaction evidence="1">
        <text>(2R)-2-phosphoglycerate = (2R)-3-phosphoglycerate</text>
        <dbReference type="Rhea" id="RHEA:15901"/>
        <dbReference type="ChEBI" id="CHEBI:58272"/>
        <dbReference type="ChEBI" id="CHEBI:58289"/>
        <dbReference type="EC" id="5.4.2.12"/>
    </reaction>
</comment>
<comment type="pathway">
    <text evidence="1">Carbohydrate degradation; glycolysis; pyruvate from D-glyceraldehyde 3-phosphate: step 3/5.</text>
</comment>
<comment type="similarity">
    <text evidence="1">Belongs to the BPG-independent phosphoglycerate mutase family. A-PGAM subfamily.</text>
</comment>